<proteinExistence type="inferred from homology"/>
<sequence>MYHVIAATTNPAKINAITLAFDDVYGPGQYRIEGVNVDSGVPLQPIGSTETRIGARQRVKNARQVRPEADFWVGIEAGIEDNMTFAWMVVEHLQARGESRSASLMLPDIILQGIRQGRELGDEMAVLSGISNVKQQGGAIGIFTQGKLTRTSVYHQALLLALVPFHNEIYQRPSPSKPAI</sequence>
<organism>
    <name type="scientific">Yersinia pestis bv. Antiqua (strain Angola)</name>
    <dbReference type="NCBI Taxonomy" id="349746"/>
    <lineage>
        <taxon>Bacteria</taxon>
        <taxon>Pseudomonadati</taxon>
        <taxon>Pseudomonadota</taxon>
        <taxon>Gammaproteobacteria</taxon>
        <taxon>Enterobacterales</taxon>
        <taxon>Yersiniaceae</taxon>
        <taxon>Yersinia</taxon>
    </lineage>
</organism>
<accession>A9R033</accession>
<gene>
    <name type="ordered locus">YpAngola_A0816</name>
</gene>
<keyword id="KW-0378">Hydrolase</keyword>
<keyword id="KW-0460">Magnesium</keyword>
<keyword id="KW-0464">Manganese</keyword>
<keyword id="KW-0479">Metal-binding</keyword>
<keyword id="KW-0546">Nucleotide metabolism</keyword>
<keyword id="KW-0547">Nucleotide-binding</keyword>
<dbReference type="EC" id="3.6.1.73" evidence="1"/>
<dbReference type="EMBL" id="CP000901">
    <property type="protein sequence ID" value="ABX87861.1"/>
    <property type="molecule type" value="Genomic_DNA"/>
</dbReference>
<dbReference type="SMR" id="A9R033"/>
<dbReference type="KEGG" id="ypg:YpAngola_A0816"/>
<dbReference type="PATRIC" id="fig|349746.12.peg.1767"/>
<dbReference type="GO" id="GO:0103023">
    <property type="term" value="F:ITPase activity"/>
    <property type="evidence" value="ECO:0007669"/>
    <property type="project" value="UniProtKB-EC"/>
</dbReference>
<dbReference type="GO" id="GO:0046872">
    <property type="term" value="F:metal ion binding"/>
    <property type="evidence" value="ECO:0007669"/>
    <property type="project" value="UniProtKB-KW"/>
</dbReference>
<dbReference type="GO" id="GO:0000166">
    <property type="term" value="F:nucleotide binding"/>
    <property type="evidence" value="ECO:0007669"/>
    <property type="project" value="UniProtKB-KW"/>
</dbReference>
<dbReference type="GO" id="GO:0017111">
    <property type="term" value="F:ribonucleoside triphosphate phosphatase activity"/>
    <property type="evidence" value="ECO:0000250"/>
    <property type="project" value="UniProtKB"/>
</dbReference>
<dbReference type="GO" id="GO:0009117">
    <property type="term" value="P:nucleotide metabolic process"/>
    <property type="evidence" value="ECO:0007669"/>
    <property type="project" value="UniProtKB-KW"/>
</dbReference>
<dbReference type="GO" id="GO:0006772">
    <property type="term" value="P:thiamine metabolic process"/>
    <property type="evidence" value="ECO:0007669"/>
    <property type="project" value="TreeGrafter"/>
</dbReference>
<dbReference type="FunFam" id="3.90.950.10:FF:000002">
    <property type="entry name" value="Inosine/xanthosine triphosphatase"/>
    <property type="match status" value="1"/>
</dbReference>
<dbReference type="Gene3D" id="3.90.950.10">
    <property type="match status" value="1"/>
</dbReference>
<dbReference type="HAMAP" id="MF_00648">
    <property type="entry name" value="Non_canon_purine_NTPase_YjjX"/>
    <property type="match status" value="1"/>
</dbReference>
<dbReference type="InterPro" id="IPR029001">
    <property type="entry name" value="ITPase-like_fam"/>
</dbReference>
<dbReference type="InterPro" id="IPR002786">
    <property type="entry name" value="Non_canon_purine_NTPase"/>
</dbReference>
<dbReference type="InterPro" id="IPR026533">
    <property type="entry name" value="NTPase/PRRC1"/>
</dbReference>
<dbReference type="InterPro" id="IPR050299">
    <property type="entry name" value="YjjX_NTPase"/>
</dbReference>
<dbReference type="NCBIfam" id="TIGR00258">
    <property type="entry name" value="inosine/xanthosine triphosphatase"/>
    <property type="match status" value="1"/>
</dbReference>
<dbReference type="NCBIfam" id="NF003459">
    <property type="entry name" value="PRK05074.1"/>
    <property type="match status" value="1"/>
</dbReference>
<dbReference type="PANTHER" id="PTHR34699">
    <property type="match status" value="1"/>
</dbReference>
<dbReference type="PANTHER" id="PTHR34699:SF2">
    <property type="entry name" value="NON-CANONICAL PURINE NTP PHOSPHATASE_PRRC1 DOMAIN-CONTAINING PROTEIN"/>
    <property type="match status" value="1"/>
</dbReference>
<dbReference type="Pfam" id="PF01931">
    <property type="entry name" value="NTPase_I-T"/>
    <property type="match status" value="1"/>
</dbReference>
<dbReference type="SUPFAM" id="SSF52972">
    <property type="entry name" value="ITPase-like"/>
    <property type="match status" value="1"/>
</dbReference>
<name>NCPP_YERPG</name>
<evidence type="ECO:0000255" key="1">
    <source>
        <dbReference type="HAMAP-Rule" id="MF_00648"/>
    </source>
</evidence>
<reference key="1">
    <citation type="journal article" date="2010" name="J. Bacteriol.">
        <title>Genome sequence of the deep-rooted Yersinia pestis strain Angola reveals new insights into the evolution and pangenome of the plague bacterium.</title>
        <authorList>
            <person name="Eppinger M."/>
            <person name="Worsham P.L."/>
            <person name="Nikolich M.P."/>
            <person name="Riley D.R."/>
            <person name="Sebastian Y."/>
            <person name="Mou S."/>
            <person name="Achtman M."/>
            <person name="Lindler L.E."/>
            <person name="Ravel J."/>
        </authorList>
    </citation>
    <scope>NUCLEOTIDE SEQUENCE [LARGE SCALE GENOMIC DNA]</scope>
    <source>
        <strain>Angola</strain>
    </source>
</reference>
<comment type="function">
    <text evidence="1">Phosphatase that hydrolyzes non-canonical purine nucleotides such as XTP and ITP to their respective diphosphate derivatives. Probably excludes non-canonical purines from DNA/RNA precursor pool, thus preventing their incorporation into DNA/RNA and avoiding chromosomal lesions.</text>
</comment>
<comment type="catalytic activity">
    <reaction evidence="1">
        <text>XTP + H2O = XDP + phosphate + H(+)</text>
        <dbReference type="Rhea" id="RHEA:28406"/>
        <dbReference type="ChEBI" id="CHEBI:15377"/>
        <dbReference type="ChEBI" id="CHEBI:15378"/>
        <dbReference type="ChEBI" id="CHEBI:43474"/>
        <dbReference type="ChEBI" id="CHEBI:59884"/>
        <dbReference type="ChEBI" id="CHEBI:61314"/>
        <dbReference type="EC" id="3.6.1.73"/>
    </reaction>
</comment>
<comment type="catalytic activity">
    <reaction evidence="1">
        <text>ITP + H2O = IDP + phosphate + H(+)</text>
        <dbReference type="Rhea" id="RHEA:28330"/>
        <dbReference type="ChEBI" id="CHEBI:15377"/>
        <dbReference type="ChEBI" id="CHEBI:15378"/>
        <dbReference type="ChEBI" id="CHEBI:43474"/>
        <dbReference type="ChEBI" id="CHEBI:58280"/>
        <dbReference type="ChEBI" id="CHEBI:61402"/>
        <dbReference type="EC" id="3.6.1.73"/>
    </reaction>
</comment>
<comment type="cofactor">
    <cofactor evidence="1">
        <name>Mg(2+)</name>
        <dbReference type="ChEBI" id="CHEBI:18420"/>
    </cofactor>
    <cofactor evidence="1">
        <name>Mn(2+)</name>
        <dbReference type="ChEBI" id="CHEBI:29035"/>
    </cofactor>
    <text evidence="1">Binds 1 divalent metal cation per subunit; can use either Mg(2+) or Mn(2+).</text>
</comment>
<comment type="subunit">
    <text evidence="1">Homodimer.</text>
</comment>
<comment type="similarity">
    <text evidence="1">Belongs to the YjjX NTPase family.</text>
</comment>
<feature type="chain" id="PRO_1000130953" description="Inosine/xanthosine triphosphatase">
    <location>
        <begin position="1"/>
        <end position="180"/>
    </location>
</feature>
<feature type="binding site" evidence="1">
    <location>
        <begin position="8"/>
        <end position="13"/>
    </location>
    <ligand>
        <name>substrate</name>
    </ligand>
</feature>
<feature type="binding site" evidence="1">
    <location>
        <position position="38"/>
    </location>
    <ligand>
        <name>Mg(2+)</name>
        <dbReference type="ChEBI" id="CHEBI:18420"/>
    </ligand>
</feature>
<feature type="binding site" evidence="1">
    <location>
        <begin position="68"/>
        <end position="69"/>
    </location>
    <ligand>
        <name>substrate</name>
    </ligand>
</feature>
<feature type="binding site" evidence="1">
    <location>
        <position position="68"/>
    </location>
    <ligand>
        <name>Mg(2+)</name>
        <dbReference type="ChEBI" id="CHEBI:18420"/>
    </ligand>
</feature>
<protein>
    <recommendedName>
        <fullName evidence="1">Inosine/xanthosine triphosphatase</fullName>
        <shortName evidence="1">ITPase/XTPase</shortName>
        <ecNumber evidence="1">3.6.1.73</ecNumber>
    </recommendedName>
    <alternativeName>
        <fullName evidence="1">Non-canonical purine NTP phosphatase</fullName>
    </alternativeName>
    <alternativeName>
        <fullName evidence="1">Non-standard purine NTP phosphatase</fullName>
    </alternativeName>
    <alternativeName>
        <fullName evidence="1">Nucleoside-triphosphate phosphatase</fullName>
        <shortName evidence="1">NTPase</shortName>
    </alternativeName>
</protein>